<proteinExistence type="inferred from homology"/>
<organism>
    <name type="scientific">Pseudomonas fluorescens (strain Pf0-1)</name>
    <dbReference type="NCBI Taxonomy" id="205922"/>
    <lineage>
        <taxon>Bacteria</taxon>
        <taxon>Pseudomonadati</taxon>
        <taxon>Pseudomonadota</taxon>
        <taxon>Gammaproteobacteria</taxon>
        <taxon>Pseudomonadales</taxon>
        <taxon>Pseudomonadaceae</taxon>
        <taxon>Pseudomonas</taxon>
    </lineage>
</organism>
<accession>Q3K5A5</accession>
<evidence type="ECO:0000255" key="1">
    <source>
        <dbReference type="HAMAP-Rule" id="MF_00651"/>
    </source>
</evidence>
<keyword id="KW-0963">Cytoplasm</keyword>
<keyword id="KW-0378">Hydrolase</keyword>
<keyword id="KW-0540">Nuclease</keyword>
<keyword id="KW-0690">Ribosome biogenesis</keyword>
<dbReference type="EC" id="3.1.-.-" evidence="1"/>
<dbReference type="EMBL" id="CP000094">
    <property type="protein sequence ID" value="ABA77049.1"/>
    <property type="molecule type" value="Genomic_DNA"/>
</dbReference>
<dbReference type="SMR" id="Q3K5A5"/>
<dbReference type="KEGG" id="pfo:Pfl01_5312"/>
<dbReference type="eggNOG" id="COG0816">
    <property type="taxonomic scope" value="Bacteria"/>
</dbReference>
<dbReference type="HOGENOM" id="CLU_098240_3_0_6"/>
<dbReference type="Proteomes" id="UP000002704">
    <property type="component" value="Chromosome"/>
</dbReference>
<dbReference type="GO" id="GO:0005829">
    <property type="term" value="C:cytosol"/>
    <property type="evidence" value="ECO:0007669"/>
    <property type="project" value="TreeGrafter"/>
</dbReference>
<dbReference type="GO" id="GO:0004518">
    <property type="term" value="F:nuclease activity"/>
    <property type="evidence" value="ECO:0007669"/>
    <property type="project" value="UniProtKB-KW"/>
</dbReference>
<dbReference type="GO" id="GO:0000967">
    <property type="term" value="P:rRNA 5'-end processing"/>
    <property type="evidence" value="ECO:0007669"/>
    <property type="project" value="UniProtKB-UniRule"/>
</dbReference>
<dbReference type="CDD" id="cd16964">
    <property type="entry name" value="YqgF"/>
    <property type="match status" value="1"/>
</dbReference>
<dbReference type="FunFam" id="3.30.420.140:FF:000002">
    <property type="entry name" value="Putative pre-16S rRNA nuclease"/>
    <property type="match status" value="1"/>
</dbReference>
<dbReference type="Gene3D" id="3.30.420.140">
    <property type="entry name" value="YqgF/RNase H-like domain"/>
    <property type="match status" value="1"/>
</dbReference>
<dbReference type="HAMAP" id="MF_00651">
    <property type="entry name" value="Nuclease_YqgF"/>
    <property type="match status" value="1"/>
</dbReference>
<dbReference type="InterPro" id="IPR012337">
    <property type="entry name" value="RNaseH-like_sf"/>
</dbReference>
<dbReference type="InterPro" id="IPR005227">
    <property type="entry name" value="YqgF"/>
</dbReference>
<dbReference type="InterPro" id="IPR006641">
    <property type="entry name" value="YqgF/RNaseH-like_dom"/>
</dbReference>
<dbReference type="InterPro" id="IPR037027">
    <property type="entry name" value="YqgF/RNaseH-like_dom_sf"/>
</dbReference>
<dbReference type="NCBIfam" id="TIGR00250">
    <property type="entry name" value="RNAse_H_YqgF"/>
    <property type="match status" value="1"/>
</dbReference>
<dbReference type="PANTHER" id="PTHR33317">
    <property type="entry name" value="POLYNUCLEOTIDYL TRANSFERASE, RIBONUCLEASE H-LIKE SUPERFAMILY PROTEIN"/>
    <property type="match status" value="1"/>
</dbReference>
<dbReference type="PANTHER" id="PTHR33317:SF4">
    <property type="entry name" value="POLYNUCLEOTIDYL TRANSFERASE, RIBONUCLEASE H-LIKE SUPERFAMILY PROTEIN"/>
    <property type="match status" value="1"/>
</dbReference>
<dbReference type="Pfam" id="PF03652">
    <property type="entry name" value="RuvX"/>
    <property type="match status" value="1"/>
</dbReference>
<dbReference type="SMART" id="SM00732">
    <property type="entry name" value="YqgFc"/>
    <property type="match status" value="1"/>
</dbReference>
<dbReference type="SUPFAM" id="SSF53098">
    <property type="entry name" value="Ribonuclease H-like"/>
    <property type="match status" value="1"/>
</dbReference>
<comment type="function">
    <text evidence="1">Could be a nuclease involved in processing of the 5'-end of pre-16S rRNA.</text>
</comment>
<comment type="subcellular location">
    <subcellularLocation>
        <location evidence="1">Cytoplasm</location>
    </subcellularLocation>
</comment>
<comment type="similarity">
    <text evidence="1">Belongs to the YqgF nuclease family.</text>
</comment>
<name>YQGF_PSEPF</name>
<gene>
    <name type="ordered locus">Pfl01_5312</name>
</gene>
<sequence length="145" mass="16051">MALRLILGFDYGTKQIGVAVGQVITGQARELCTLKAQNGVPDWNQVEALIKEWKPDAVVVGLPLNMDGTPSEMCARAEKFARRLNGRFNLPFYTHDERLTTFEAKGERLVRGGQKGSYRDNPVDAIAAALLLQGWLDENTALFES</sequence>
<protein>
    <recommendedName>
        <fullName evidence="1">Putative pre-16S rRNA nuclease</fullName>
        <ecNumber evidence="1">3.1.-.-</ecNumber>
    </recommendedName>
</protein>
<reference key="1">
    <citation type="journal article" date="2009" name="Genome Biol.">
        <title>Genomic and genetic analyses of diversity and plant interactions of Pseudomonas fluorescens.</title>
        <authorList>
            <person name="Silby M.W."/>
            <person name="Cerdeno-Tarraga A.M."/>
            <person name="Vernikos G.S."/>
            <person name="Giddens S.R."/>
            <person name="Jackson R.W."/>
            <person name="Preston G.M."/>
            <person name="Zhang X.-X."/>
            <person name="Moon C.D."/>
            <person name="Gehrig S.M."/>
            <person name="Godfrey S.A.C."/>
            <person name="Knight C.G."/>
            <person name="Malone J.G."/>
            <person name="Robinson Z."/>
            <person name="Spiers A.J."/>
            <person name="Harris S."/>
            <person name="Challis G.L."/>
            <person name="Yaxley A.M."/>
            <person name="Harris D."/>
            <person name="Seeger K."/>
            <person name="Murphy L."/>
            <person name="Rutter S."/>
            <person name="Squares R."/>
            <person name="Quail M.A."/>
            <person name="Saunders E."/>
            <person name="Mavromatis K."/>
            <person name="Brettin T.S."/>
            <person name="Bentley S.D."/>
            <person name="Hothersall J."/>
            <person name="Stephens E."/>
            <person name="Thomas C.M."/>
            <person name="Parkhill J."/>
            <person name="Levy S.B."/>
            <person name="Rainey P.B."/>
            <person name="Thomson N.R."/>
        </authorList>
    </citation>
    <scope>NUCLEOTIDE SEQUENCE [LARGE SCALE GENOMIC DNA]</scope>
    <source>
        <strain>Pf0-1</strain>
    </source>
</reference>
<feature type="chain" id="PRO_0000257566" description="Putative pre-16S rRNA nuclease">
    <location>
        <begin position="1"/>
        <end position="145"/>
    </location>
</feature>